<protein>
    <recommendedName>
        <fullName>Cyclomaltodextrin glucanotransferase</fullName>
        <ecNumber>2.4.1.19</ecNumber>
    </recommendedName>
    <alternativeName>
        <fullName>Cyclodextrin-glycosyltransferase</fullName>
        <shortName>CGTase</shortName>
    </alternativeName>
</protein>
<proteinExistence type="evidence at protein level"/>
<organism>
    <name type="scientific">Paenibacillus macerans</name>
    <name type="common">Bacillus macerans</name>
    <dbReference type="NCBI Taxonomy" id="44252"/>
    <lineage>
        <taxon>Bacteria</taxon>
        <taxon>Bacillati</taxon>
        <taxon>Bacillota</taxon>
        <taxon>Bacilli</taxon>
        <taxon>Bacillales</taxon>
        <taxon>Paenibacillaceae</taxon>
        <taxon>Paenibacillus</taxon>
    </lineage>
</organism>
<dbReference type="EC" id="2.4.1.19"/>
<dbReference type="PIR" id="S26589">
    <property type="entry name" value="ALBSXR"/>
</dbReference>
<dbReference type="SMR" id="P31835"/>
<dbReference type="CAZy" id="CBM20">
    <property type="family name" value="Carbohydrate-Binding Module Family 20"/>
</dbReference>
<dbReference type="CAZy" id="GH13">
    <property type="family name" value="Glycoside Hydrolase Family 13"/>
</dbReference>
<dbReference type="BRENDA" id="2.4.1.19">
    <property type="organism ID" value="670"/>
</dbReference>
<dbReference type="GO" id="GO:0005576">
    <property type="term" value="C:extracellular region"/>
    <property type="evidence" value="ECO:0007669"/>
    <property type="project" value="UniProtKB-SubCell"/>
</dbReference>
<dbReference type="GO" id="GO:0004556">
    <property type="term" value="F:alpha-amylase activity"/>
    <property type="evidence" value="ECO:0007669"/>
    <property type="project" value="InterPro"/>
</dbReference>
<dbReference type="GO" id="GO:0043895">
    <property type="term" value="F:cyclomaltodextrin glucanotransferase activity"/>
    <property type="evidence" value="ECO:0007669"/>
    <property type="project" value="UniProtKB-EC"/>
</dbReference>
<dbReference type="GO" id="GO:0046872">
    <property type="term" value="F:metal ion binding"/>
    <property type="evidence" value="ECO:0007669"/>
    <property type="project" value="UniProtKB-KW"/>
</dbReference>
<dbReference type="GO" id="GO:2001070">
    <property type="term" value="F:starch binding"/>
    <property type="evidence" value="ECO:0007669"/>
    <property type="project" value="InterPro"/>
</dbReference>
<dbReference type="GO" id="GO:0005975">
    <property type="term" value="P:carbohydrate metabolic process"/>
    <property type="evidence" value="ECO:0007669"/>
    <property type="project" value="InterPro"/>
</dbReference>
<dbReference type="CDD" id="cd11320">
    <property type="entry name" value="AmyAc_AmyMalt_CGTase_like"/>
    <property type="match status" value="1"/>
</dbReference>
<dbReference type="CDD" id="cd00604">
    <property type="entry name" value="IPT_CGTD"/>
    <property type="match status" value="1"/>
</dbReference>
<dbReference type="Gene3D" id="3.20.20.80">
    <property type="entry name" value="Glycosidases"/>
    <property type="match status" value="1"/>
</dbReference>
<dbReference type="Gene3D" id="2.60.40.1180">
    <property type="entry name" value="Golgi alpha-mannosidase II"/>
    <property type="match status" value="1"/>
</dbReference>
<dbReference type="Gene3D" id="2.60.40.10">
    <property type="entry name" value="Immunoglobulins"/>
    <property type="match status" value="2"/>
</dbReference>
<dbReference type="InterPro" id="IPR031319">
    <property type="entry name" value="A-amylase_C"/>
</dbReference>
<dbReference type="InterPro" id="IPR006046">
    <property type="entry name" value="Alpha_amylase"/>
</dbReference>
<dbReference type="InterPro" id="IPR013784">
    <property type="entry name" value="Carb-bd-like_fold"/>
</dbReference>
<dbReference type="InterPro" id="IPR002044">
    <property type="entry name" value="CBM20"/>
</dbReference>
<dbReference type="InterPro" id="IPR006047">
    <property type="entry name" value="Glyco_hydro_13_cat_dom"/>
</dbReference>
<dbReference type="InterPro" id="IPR013780">
    <property type="entry name" value="Glyco_hydro_b"/>
</dbReference>
<dbReference type="InterPro" id="IPR017853">
    <property type="entry name" value="Glycoside_hydrolase_SF"/>
</dbReference>
<dbReference type="InterPro" id="IPR013783">
    <property type="entry name" value="Ig-like_fold"/>
</dbReference>
<dbReference type="InterPro" id="IPR014756">
    <property type="entry name" value="Ig_E-set"/>
</dbReference>
<dbReference type="InterPro" id="IPR002909">
    <property type="entry name" value="IPT_dom"/>
</dbReference>
<dbReference type="PANTHER" id="PTHR10357:SF215">
    <property type="entry name" value="ALPHA-AMYLASE 1"/>
    <property type="match status" value="1"/>
</dbReference>
<dbReference type="PANTHER" id="PTHR10357">
    <property type="entry name" value="ALPHA-AMYLASE FAMILY MEMBER"/>
    <property type="match status" value="1"/>
</dbReference>
<dbReference type="Pfam" id="PF00128">
    <property type="entry name" value="Alpha-amylase"/>
    <property type="match status" value="1"/>
</dbReference>
<dbReference type="Pfam" id="PF00686">
    <property type="entry name" value="CBM_20"/>
    <property type="match status" value="1"/>
</dbReference>
<dbReference type="Pfam" id="PF01833">
    <property type="entry name" value="TIG"/>
    <property type="match status" value="1"/>
</dbReference>
<dbReference type="PRINTS" id="PR00110">
    <property type="entry name" value="ALPHAAMYLASE"/>
</dbReference>
<dbReference type="SMART" id="SM00642">
    <property type="entry name" value="Aamy"/>
    <property type="match status" value="1"/>
</dbReference>
<dbReference type="SMART" id="SM00632">
    <property type="entry name" value="Aamy_C"/>
    <property type="match status" value="1"/>
</dbReference>
<dbReference type="SMART" id="SM01065">
    <property type="entry name" value="CBM_2"/>
    <property type="match status" value="1"/>
</dbReference>
<dbReference type="SUPFAM" id="SSF51445">
    <property type="entry name" value="(Trans)glycosidases"/>
    <property type="match status" value="1"/>
</dbReference>
<dbReference type="SUPFAM" id="SSF81296">
    <property type="entry name" value="E set domains"/>
    <property type="match status" value="1"/>
</dbReference>
<dbReference type="SUPFAM" id="SSF51011">
    <property type="entry name" value="Glycosyl hydrolase domain"/>
    <property type="match status" value="1"/>
</dbReference>
<dbReference type="SUPFAM" id="SSF49452">
    <property type="entry name" value="Starch-binding domain-like"/>
    <property type="match status" value="1"/>
</dbReference>
<dbReference type="PROSITE" id="PS51166">
    <property type="entry name" value="CBM20"/>
    <property type="match status" value="1"/>
</dbReference>
<evidence type="ECO:0000250" key="1"/>
<evidence type="ECO:0000255" key="2">
    <source>
        <dbReference type="PROSITE-ProRule" id="PRU00594"/>
    </source>
</evidence>
<evidence type="ECO:0000269" key="3">
    <source ref="1"/>
</evidence>
<evidence type="ECO:0000305" key="4"/>
<name>CDGT2_PAEMA</name>
<comment type="catalytic activity">
    <reaction>
        <text>Cyclizes part of a (1-&gt;4)-alpha-D-glucan chain by formation of a (1-&gt;4)-alpha-D-glucosidic bond.</text>
        <dbReference type="EC" id="2.4.1.19"/>
    </reaction>
</comment>
<comment type="cofactor">
    <cofactor evidence="1">
        <name>Ca(2+)</name>
        <dbReference type="ChEBI" id="CHEBI:29108"/>
    </cofactor>
    <text evidence="1">Binds 2 calcium ions per subunit.</text>
</comment>
<comment type="subunit">
    <text>Monomer.</text>
</comment>
<comment type="subcellular location">
    <subcellularLocation>
        <location evidence="1">Secreted</location>
    </subcellularLocation>
</comment>
<comment type="domain">
    <text>May consist of two protein domains: the one in the N-terminal side cleaves the alpha-1,4-glucosidic bond in starch, and the other in the C-terminal side catalyzes other activities, including the reconstitution of an alpha-1,4-glucosidic linkage for cyclizing the maltooligosaccharide produced.</text>
</comment>
<comment type="similarity">
    <text evidence="4">Belongs to the glycosyl hydrolase 13 family.</text>
</comment>
<sequence>MKKQVKWLTSVSMSVGIALGAALPVWASPDTSVNNKLNFSTDTVYQIVTDRFVDGNSANNPTGAAFSSDHSNLKLYFGGDWQGITNKINDGYLTGMGITALWISQPVENITAVINYSGVNNTAYHGYWPRDFKKTNAAFGSFTDFSNLIAAAHSHNIKVVMDFAPNHTNPASSTDPSFAENGALYNNGTLLGKYSNDTAGLFHHNGGTDFSTTESGIYKNLYDLADINQNNNTIDSYLKESIQLWLNLGVDGIRFDAVKHMPQGWQKSYVSSIYSSANPVFTFGEWFLGPDEMTQDNINFANQSGMHLLDFAFAQEIREVFRDKSETMTDLNSVISSTGSSYNYINNMVTFIDNHDMDRFQQAGASTRPTEQALAVTLTSRGVPAIYYGTEQYMTGNGDPNNRGMMTGFDTNKTAYKVIKALAPLRKSNPALAYGSTTQRWVNSDVYVYERKFGSNVALVAVNRSSTTAYPISGALTALPNGTYTDVLGGLLNGNSITVNGGTVSNFTLAAGGTAVWQYTTTESSPIIGNVGPTMGKPGNTITIDGRGFGTTKNKVTFGTTAVTGANIVSWEDTEIKVKVPNVAAGNTAVTVTNAAGTTSAAFNNFNVLTADQVTVRFKVNNATTALGQNVYLTGNVAELGNWTAANAIGPMYNQVEASYPTWYFDVSVPANTALQFKFIKVNGSTVTWEGGNNHTFTSPSSGVATVTVDWQN</sequence>
<feature type="signal peptide" evidence="3">
    <location>
        <begin position="1"/>
        <end position="27"/>
    </location>
</feature>
<feature type="chain" id="PRO_0000001435" description="Cyclomaltodextrin glucanotransferase">
    <location>
        <begin position="28"/>
        <end position="713"/>
    </location>
</feature>
<feature type="domain" description="IPT/TIG">
    <location>
        <begin position="526"/>
        <end position="606"/>
    </location>
</feature>
<feature type="domain" description="CBM20" evidence="2">
    <location>
        <begin position="608"/>
        <end position="713"/>
    </location>
</feature>
<feature type="region of interest" description="A1">
    <location>
        <begin position="28"/>
        <end position="165"/>
    </location>
</feature>
<feature type="region of interest" description="B">
    <location>
        <begin position="166"/>
        <end position="229"/>
    </location>
</feature>
<feature type="region of interest" description="A2">
    <location>
        <begin position="230"/>
        <end position="434"/>
    </location>
</feature>
<feature type="region of interest" description="C">
    <location>
        <begin position="435"/>
        <end position="522"/>
    </location>
</feature>
<feature type="region of interest" description="D">
    <location>
        <begin position="523"/>
        <end position="609"/>
    </location>
</feature>
<feature type="region of interest" description="E">
    <location>
        <begin position="610"/>
        <end position="713"/>
    </location>
</feature>
<feature type="active site" description="Nucleophile" evidence="1">
    <location>
        <position position="256"/>
    </location>
</feature>
<feature type="active site" description="Proton donor" evidence="1">
    <location>
        <position position="285"/>
    </location>
</feature>
<feature type="binding site" evidence="1">
    <location>
        <position position="54"/>
    </location>
    <ligand>
        <name>Ca(2+)</name>
        <dbReference type="ChEBI" id="CHEBI:29108"/>
        <label>1</label>
    </ligand>
</feature>
<feature type="binding site" evidence="1">
    <location>
        <position position="56"/>
    </location>
    <ligand>
        <name>Ca(2+)</name>
        <dbReference type="ChEBI" id="CHEBI:29108"/>
        <label>1</label>
    </ligand>
</feature>
<feature type="binding site" evidence="1">
    <location>
        <position position="59"/>
    </location>
    <ligand>
        <name>Ca(2+)</name>
        <dbReference type="ChEBI" id="CHEBI:29108"/>
        <label>1</label>
    </ligand>
</feature>
<feature type="binding site" evidence="1">
    <location>
        <position position="60"/>
    </location>
    <ligand>
        <name>Ca(2+)</name>
        <dbReference type="ChEBI" id="CHEBI:29108"/>
        <label>1</label>
    </ligand>
</feature>
<feature type="binding site" evidence="1">
    <location>
        <position position="78"/>
    </location>
    <ligand>
        <name>Ca(2+)</name>
        <dbReference type="ChEBI" id="CHEBI:29108"/>
        <label>1</label>
    </ligand>
</feature>
<feature type="binding site" evidence="1">
    <location>
        <position position="80"/>
    </location>
    <ligand>
        <name>Ca(2+)</name>
        <dbReference type="ChEBI" id="CHEBI:29108"/>
        <label>1</label>
    </ligand>
</feature>
<feature type="binding site" evidence="1">
    <location>
        <begin position="127"/>
        <end position="128"/>
    </location>
    <ligand>
        <name>substrate</name>
    </ligand>
</feature>
<feature type="binding site" evidence="1">
    <location>
        <position position="166"/>
    </location>
    <ligand>
        <name>Ca(2+)</name>
        <dbReference type="ChEBI" id="CHEBI:29108"/>
        <label>2</label>
    </ligand>
</feature>
<feature type="binding site" evidence="1">
    <location>
        <position position="167"/>
    </location>
    <ligand>
        <name>substrate</name>
    </ligand>
</feature>
<feature type="binding site" evidence="1">
    <location>
        <position position="217"/>
    </location>
    <ligand>
        <name>Ca(2+)</name>
        <dbReference type="ChEBI" id="CHEBI:29108"/>
        <label>2</label>
    </ligand>
</feature>
<feature type="binding site" evidence="1">
    <location>
        <begin position="220"/>
        <end position="223"/>
    </location>
    <ligand>
        <name>substrate</name>
    </ligand>
</feature>
<feature type="binding site" evidence="1">
    <location>
        <position position="226"/>
    </location>
    <ligand>
        <name>Ca(2+)</name>
        <dbReference type="ChEBI" id="CHEBI:29108"/>
        <label>2</label>
    </ligand>
</feature>
<feature type="binding site" evidence="1">
    <location>
        <position position="254"/>
    </location>
    <ligand>
        <name>substrate</name>
    </ligand>
</feature>
<feature type="binding site" evidence="1">
    <location>
        <begin position="259"/>
        <end position="260"/>
    </location>
    <ligand>
        <name>substrate</name>
    </ligand>
</feature>
<feature type="binding site" evidence="1">
    <location>
        <position position="260"/>
    </location>
    <ligand>
        <name>Ca(2+)</name>
        <dbReference type="ChEBI" id="CHEBI:29108"/>
        <label>2</label>
    </ligand>
</feature>
<feature type="binding site" evidence="1">
    <location>
        <position position="355"/>
    </location>
    <ligand>
        <name>substrate</name>
    </ligand>
</feature>
<feature type="binding site" evidence="1">
    <location>
        <position position="399"/>
    </location>
    <ligand>
        <name>substrate</name>
    </ligand>
</feature>
<feature type="binding site" evidence="1">
    <location>
        <position position="403"/>
    </location>
    <ligand>
        <name>substrate</name>
    </ligand>
</feature>
<feature type="site" description="Transition state stabilizer" evidence="1">
    <location>
        <position position="356"/>
    </location>
</feature>
<keyword id="KW-0106">Calcium</keyword>
<keyword id="KW-0903">Direct protein sequencing</keyword>
<keyword id="KW-0328">Glycosyltransferase</keyword>
<keyword id="KW-0479">Metal-binding</keyword>
<keyword id="KW-0964">Secreted</keyword>
<keyword id="KW-0732">Signal</keyword>
<keyword id="KW-0808">Transferase</keyword>
<accession>P31835</accession>
<reference key="1">
    <citation type="patent" date="1986-07-23" number="GB2169902">
        <title>Polypeptide possessing cyclomaltodextrin glucanotransferase activity.</title>
        <authorList>
            <person name="Sugimoto T."/>
            <person name="Kubota M."/>
            <person name="Sakai S."/>
        </authorList>
    </citation>
    <scope>NUCLEOTIDE SEQUENCE [GENOMIC DNA]</scope>
    <scope>PROTEIN SEQUENCE OF 28-37</scope>
</reference>